<geneLocation type="chloroplast"/>
<sequence length="159" mass="16870">MVDRKRNYKDRDNRVEWEERVVSVQRVTKVVKGGKKLSFRAVVVVGDQQGKVGVGVGKASDVSTAVRKGVTDGKKNVITVPLTSSNSIPHKINGRFGAAKLVLRPSAPGCGVIAGGAPRIVLELAGIKNILSKQLGSNSLLNNARATIDGLSNLRTFVA</sequence>
<dbReference type="EMBL" id="AY741371">
    <property type="protein sequence ID" value="AAX13914.1"/>
    <property type="molecule type" value="Genomic_DNA"/>
</dbReference>
<dbReference type="RefSeq" id="YP_277415.1">
    <property type="nucleotide sequence ID" value="NC_007288.1"/>
</dbReference>
<dbReference type="SMR" id="Q4G352"/>
<dbReference type="STRING" id="2903.Q4G352"/>
<dbReference type="GeneID" id="3562499"/>
<dbReference type="GO" id="GO:0009507">
    <property type="term" value="C:chloroplast"/>
    <property type="evidence" value="ECO:0007669"/>
    <property type="project" value="UniProtKB-SubCell"/>
</dbReference>
<dbReference type="GO" id="GO:0015935">
    <property type="term" value="C:small ribosomal subunit"/>
    <property type="evidence" value="ECO:0007669"/>
    <property type="project" value="InterPro"/>
</dbReference>
<dbReference type="GO" id="GO:0019843">
    <property type="term" value="F:rRNA binding"/>
    <property type="evidence" value="ECO:0007669"/>
    <property type="project" value="UniProtKB-UniRule"/>
</dbReference>
<dbReference type="GO" id="GO:0003735">
    <property type="term" value="F:structural constituent of ribosome"/>
    <property type="evidence" value="ECO:0007669"/>
    <property type="project" value="InterPro"/>
</dbReference>
<dbReference type="GO" id="GO:0006412">
    <property type="term" value="P:translation"/>
    <property type="evidence" value="ECO:0007669"/>
    <property type="project" value="UniProtKB-UniRule"/>
</dbReference>
<dbReference type="FunFam" id="3.30.160.20:FF:000001">
    <property type="entry name" value="30S ribosomal protein S5"/>
    <property type="match status" value="1"/>
</dbReference>
<dbReference type="FunFam" id="3.30.230.10:FF:000002">
    <property type="entry name" value="30S ribosomal protein S5"/>
    <property type="match status" value="1"/>
</dbReference>
<dbReference type="Gene3D" id="3.30.160.20">
    <property type="match status" value="1"/>
</dbReference>
<dbReference type="Gene3D" id="3.30.230.10">
    <property type="match status" value="1"/>
</dbReference>
<dbReference type="HAMAP" id="MF_01307_B">
    <property type="entry name" value="Ribosomal_uS5_B"/>
    <property type="match status" value="1"/>
</dbReference>
<dbReference type="InterPro" id="IPR020568">
    <property type="entry name" value="Ribosomal_Su5_D2-typ_SF"/>
</dbReference>
<dbReference type="InterPro" id="IPR000851">
    <property type="entry name" value="Ribosomal_uS5"/>
</dbReference>
<dbReference type="InterPro" id="IPR005712">
    <property type="entry name" value="Ribosomal_uS5_bac-type"/>
</dbReference>
<dbReference type="InterPro" id="IPR005324">
    <property type="entry name" value="Ribosomal_uS5_C"/>
</dbReference>
<dbReference type="InterPro" id="IPR013810">
    <property type="entry name" value="Ribosomal_uS5_N"/>
</dbReference>
<dbReference type="InterPro" id="IPR018192">
    <property type="entry name" value="Ribosomal_uS5_N_CS"/>
</dbReference>
<dbReference type="InterPro" id="IPR014721">
    <property type="entry name" value="Ribsml_uS5_D2-typ_fold_subgr"/>
</dbReference>
<dbReference type="NCBIfam" id="TIGR01021">
    <property type="entry name" value="rpsE_bact"/>
    <property type="match status" value="1"/>
</dbReference>
<dbReference type="PANTHER" id="PTHR48277">
    <property type="entry name" value="MITOCHONDRIAL RIBOSOMAL PROTEIN S5"/>
    <property type="match status" value="1"/>
</dbReference>
<dbReference type="PANTHER" id="PTHR48277:SF1">
    <property type="entry name" value="MITOCHONDRIAL RIBOSOMAL PROTEIN S5"/>
    <property type="match status" value="1"/>
</dbReference>
<dbReference type="Pfam" id="PF00333">
    <property type="entry name" value="Ribosomal_S5"/>
    <property type="match status" value="1"/>
</dbReference>
<dbReference type="Pfam" id="PF03719">
    <property type="entry name" value="Ribosomal_S5_C"/>
    <property type="match status" value="1"/>
</dbReference>
<dbReference type="SUPFAM" id="SSF54768">
    <property type="entry name" value="dsRNA-binding domain-like"/>
    <property type="match status" value="1"/>
</dbReference>
<dbReference type="SUPFAM" id="SSF54211">
    <property type="entry name" value="Ribosomal protein S5 domain 2-like"/>
    <property type="match status" value="1"/>
</dbReference>
<dbReference type="PROSITE" id="PS00585">
    <property type="entry name" value="RIBOSOMAL_S5"/>
    <property type="match status" value="1"/>
</dbReference>
<dbReference type="PROSITE" id="PS50881">
    <property type="entry name" value="S5_DSRBD"/>
    <property type="match status" value="1"/>
</dbReference>
<gene>
    <name type="primary">rps5</name>
</gene>
<feature type="chain" id="PRO_0000293222" description="Small ribosomal subunit protein uS5c">
    <location>
        <begin position="1"/>
        <end position="159"/>
    </location>
</feature>
<feature type="domain" description="S5 DRBM">
    <location>
        <begin position="17"/>
        <end position="80"/>
    </location>
</feature>
<organism>
    <name type="scientific">Emiliania huxleyi</name>
    <name type="common">Coccolithophore</name>
    <name type="synonym">Pontosphaera huxleyi</name>
    <dbReference type="NCBI Taxonomy" id="2903"/>
    <lineage>
        <taxon>Eukaryota</taxon>
        <taxon>Haptista</taxon>
        <taxon>Haptophyta</taxon>
        <taxon>Prymnesiophyceae</taxon>
        <taxon>Isochrysidales</taxon>
        <taxon>Noelaerhabdaceae</taxon>
        <taxon>Emiliania</taxon>
    </lineage>
</organism>
<proteinExistence type="inferred from homology"/>
<evidence type="ECO:0000250" key="1"/>
<evidence type="ECO:0000305" key="2"/>
<protein>
    <recommendedName>
        <fullName evidence="2">Small ribosomal subunit protein uS5c</fullName>
    </recommendedName>
    <alternativeName>
        <fullName>30S ribosomal protein S5, chloroplastic</fullName>
    </alternativeName>
</protein>
<comment type="function">
    <text evidence="1">With S4 and S12 plays an important role in translational accuracy.</text>
</comment>
<comment type="subunit">
    <text evidence="1">Part of the 30S ribosomal subunit. Contacts protein S4 (By similarity).</text>
</comment>
<comment type="subcellular location">
    <subcellularLocation>
        <location>Plastid</location>
        <location>Chloroplast</location>
    </subcellularLocation>
</comment>
<comment type="domain">
    <text>The N-terminal domain interacts with the head of the 30S subunit; the C-terminal domain interacts with the body and contacts protein S4. The interaction surface between S4 and S5 is involved in control of translational fidelity.</text>
</comment>
<comment type="similarity">
    <text evidence="2">Belongs to the universal ribosomal protein uS5 family.</text>
</comment>
<keyword id="KW-0150">Chloroplast</keyword>
<keyword id="KW-0934">Plastid</keyword>
<keyword id="KW-0687">Ribonucleoprotein</keyword>
<keyword id="KW-0689">Ribosomal protein</keyword>
<keyword id="KW-0694">RNA-binding</keyword>
<keyword id="KW-0699">rRNA-binding</keyword>
<accession>Q4G352</accession>
<name>RR5_EMIHU</name>
<reference key="1">
    <citation type="journal article" date="2005" name="DNA Res.">
        <title>The complete plastid genome sequence of the haptophyte Emiliania huxleyi: a comparison to other plastid genomes.</title>
        <authorList>
            <person name="Sanchez-Puerta M.V."/>
            <person name="Bachvaroff T.R."/>
            <person name="Delwiche C.F."/>
        </authorList>
    </citation>
    <scope>NUCLEOTIDE SEQUENCE [LARGE SCALE GENOMIC DNA]</scope>
    <source>
        <strain>CCMP373 / CSIRO-CS-57 / BT6</strain>
    </source>
</reference>